<reference key="1">
    <citation type="journal article" date="2000" name="Nature">
        <title>Sequence and analysis of chromosome 5 of the plant Arabidopsis thaliana.</title>
        <authorList>
            <person name="Tabata S."/>
            <person name="Kaneko T."/>
            <person name="Nakamura Y."/>
            <person name="Kotani H."/>
            <person name="Kato T."/>
            <person name="Asamizu E."/>
            <person name="Miyajima N."/>
            <person name="Sasamoto S."/>
            <person name="Kimura T."/>
            <person name="Hosouchi T."/>
            <person name="Kawashima K."/>
            <person name="Kohara M."/>
            <person name="Matsumoto M."/>
            <person name="Matsuno A."/>
            <person name="Muraki A."/>
            <person name="Nakayama S."/>
            <person name="Nakazaki N."/>
            <person name="Naruo K."/>
            <person name="Okumura S."/>
            <person name="Shinpo S."/>
            <person name="Takeuchi C."/>
            <person name="Wada T."/>
            <person name="Watanabe A."/>
            <person name="Yamada M."/>
            <person name="Yasuda M."/>
            <person name="Sato S."/>
            <person name="de la Bastide M."/>
            <person name="Huang E."/>
            <person name="Spiegel L."/>
            <person name="Gnoj L."/>
            <person name="O'Shaughnessy A."/>
            <person name="Preston R."/>
            <person name="Habermann K."/>
            <person name="Murray J."/>
            <person name="Johnson D."/>
            <person name="Rohlfing T."/>
            <person name="Nelson J."/>
            <person name="Stoneking T."/>
            <person name="Pepin K."/>
            <person name="Spieth J."/>
            <person name="Sekhon M."/>
            <person name="Armstrong J."/>
            <person name="Becker M."/>
            <person name="Belter E."/>
            <person name="Cordum H."/>
            <person name="Cordes M."/>
            <person name="Courtney L."/>
            <person name="Courtney W."/>
            <person name="Dante M."/>
            <person name="Du H."/>
            <person name="Edwards J."/>
            <person name="Fryman J."/>
            <person name="Haakensen B."/>
            <person name="Lamar E."/>
            <person name="Latreille P."/>
            <person name="Leonard S."/>
            <person name="Meyer R."/>
            <person name="Mulvaney E."/>
            <person name="Ozersky P."/>
            <person name="Riley A."/>
            <person name="Strowmatt C."/>
            <person name="Wagner-McPherson C."/>
            <person name="Wollam A."/>
            <person name="Yoakum M."/>
            <person name="Bell M."/>
            <person name="Dedhia N."/>
            <person name="Parnell L."/>
            <person name="Shah R."/>
            <person name="Rodriguez M."/>
            <person name="Hoon See L."/>
            <person name="Vil D."/>
            <person name="Baker J."/>
            <person name="Kirchoff K."/>
            <person name="Toth K."/>
            <person name="King L."/>
            <person name="Bahret A."/>
            <person name="Miller B."/>
            <person name="Marra M.A."/>
            <person name="Martienssen R."/>
            <person name="McCombie W.R."/>
            <person name="Wilson R.K."/>
            <person name="Murphy G."/>
            <person name="Bancroft I."/>
            <person name="Volckaert G."/>
            <person name="Wambutt R."/>
            <person name="Duesterhoeft A."/>
            <person name="Stiekema W."/>
            <person name="Pohl T."/>
            <person name="Entian K.-D."/>
            <person name="Terryn N."/>
            <person name="Hartley N."/>
            <person name="Bent E."/>
            <person name="Johnson S."/>
            <person name="Langham S.-A."/>
            <person name="McCullagh B."/>
            <person name="Robben J."/>
            <person name="Grymonprez B."/>
            <person name="Zimmermann W."/>
            <person name="Ramsperger U."/>
            <person name="Wedler H."/>
            <person name="Balke K."/>
            <person name="Wedler E."/>
            <person name="Peters S."/>
            <person name="van Staveren M."/>
            <person name="Dirkse W."/>
            <person name="Mooijman P."/>
            <person name="Klein Lankhorst R."/>
            <person name="Weitzenegger T."/>
            <person name="Bothe G."/>
            <person name="Rose M."/>
            <person name="Hauf J."/>
            <person name="Berneiser S."/>
            <person name="Hempel S."/>
            <person name="Feldpausch M."/>
            <person name="Lamberth S."/>
            <person name="Villarroel R."/>
            <person name="Gielen J."/>
            <person name="Ardiles W."/>
            <person name="Bents O."/>
            <person name="Lemcke K."/>
            <person name="Kolesov G."/>
            <person name="Mayer K.F.X."/>
            <person name="Rudd S."/>
            <person name="Schoof H."/>
            <person name="Schueller C."/>
            <person name="Zaccaria P."/>
            <person name="Mewes H.-W."/>
            <person name="Bevan M."/>
            <person name="Fransz P.F."/>
        </authorList>
    </citation>
    <scope>NUCLEOTIDE SEQUENCE [LARGE SCALE GENOMIC DNA]</scope>
    <source>
        <strain>cv. Columbia</strain>
    </source>
</reference>
<reference key="2">
    <citation type="journal article" date="2017" name="Plant J.">
        <title>Araport11: a complete reannotation of the Arabidopsis thaliana reference genome.</title>
        <authorList>
            <person name="Cheng C.Y."/>
            <person name="Krishnakumar V."/>
            <person name="Chan A.P."/>
            <person name="Thibaud-Nissen F."/>
            <person name="Schobel S."/>
            <person name="Town C.D."/>
        </authorList>
    </citation>
    <scope>GENOME REANNOTATION</scope>
    <source>
        <strain>cv. Columbia</strain>
    </source>
</reference>
<reference key="3">
    <citation type="journal article" date="2002" name="Science">
        <title>Functional annotation of a full-length Arabidopsis cDNA collection.</title>
        <authorList>
            <person name="Seki M."/>
            <person name="Narusaka M."/>
            <person name="Kamiya A."/>
            <person name="Ishida J."/>
            <person name="Satou M."/>
            <person name="Sakurai T."/>
            <person name="Nakajima M."/>
            <person name="Enju A."/>
            <person name="Akiyama K."/>
            <person name="Oono Y."/>
            <person name="Muramatsu M."/>
            <person name="Hayashizaki Y."/>
            <person name="Kawai J."/>
            <person name="Carninci P."/>
            <person name="Itoh M."/>
            <person name="Ishii Y."/>
            <person name="Arakawa T."/>
            <person name="Shibata K."/>
            <person name="Shinagawa A."/>
            <person name="Shinozaki K."/>
        </authorList>
    </citation>
    <scope>NUCLEOTIDE SEQUENCE [LARGE SCALE MRNA]</scope>
    <source>
        <strain>cv. Columbia</strain>
    </source>
</reference>
<reference key="4">
    <citation type="journal article" date="2003" name="Science">
        <title>Empirical analysis of transcriptional activity in the Arabidopsis genome.</title>
        <authorList>
            <person name="Yamada K."/>
            <person name="Lim J."/>
            <person name="Dale J.M."/>
            <person name="Chen H."/>
            <person name="Shinn P."/>
            <person name="Palm C.J."/>
            <person name="Southwick A.M."/>
            <person name="Wu H.C."/>
            <person name="Kim C.J."/>
            <person name="Nguyen M."/>
            <person name="Pham P.K."/>
            <person name="Cheuk R.F."/>
            <person name="Karlin-Newmann G."/>
            <person name="Liu S.X."/>
            <person name="Lam B."/>
            <person name="Sakano H."/>
            <person name="Wu T."/>
            <person name="Yu G."/>
            <person name="Miranda M."/>
            <person name="Quach H.L."/>
            <person name="Tripp M."/>
            <person name="Chang C.H."/>
            <person name="Lee J.M."/>
            <person name="Toriumi M.J."/>
            <person name="Chan M.M."/>
            <person name="Tang C.C."/>
            <person name="Onodera C.S."/>
            <person name="Deng J.M."/>
            <person name="Akiyama K."/>
            <person name="Ansari Y."/>
            <person name="Arakawa T."/>
            <person name="Banh J."/>
            <person name="Banno F."/>
            <person name="Bowser L."/>
            <person name="Brooks S.Y."/>
            <person name="Carninci P."/>
            <person name="Chao Q."/>
            <person name="Choy N."/>
            <person name="Enju A."/>
            <person name="Goldsmith A.D."/>
            <person name="Gurjal M."/>
            <person name="Hansen N.F."/>
            <person name="Hayashizaki Y."/>
            <person name="Johnson-Hopson C."/>
            <person name="Hsuan V.W."/>
            <person name="Iida K."/>
            <person name="Karnes M."/>
            <person name="Khan S."/>
            <person name="Koesema E."/>
            <person name="Ishida J."/>
            <person name="Jiang P.X."/>
            <person name="Jones T."/>
            <person name="Kawai J."/>
            <person name="Kamiya A."/>
            <person name="Meyers C."/>
            <person name="Nakajima M."/>
            <person name="Narusaka M."/>
            <person name="Seki M."/>
            <person name="Sakurai T."/>
            <person name="Satou M."/>
            <person name="Tamse R."/>
            <person name="Vaysberg M."/>
            <person name="Wallender E.K."/>
            <person name="Wong C."/>
            <person name="Yamamura Y."/>
            <person name="Yuan S."/>
            <person name="Shinozaki K."/>
            <person name="Davis R.W."/>
            <person name="Theologis A."/>
            <person name="Ecker J.R."/>
        </authorList>
    </citation>
    <scope>NUCLEOTIDE SEQUENCE [LARGE SCALE MRNA]</scope>
    <source>
        <strain>cv. Columbia</strain>
    </source>
</reference>
<reference key="5">
    <citation type="journal article" date="2004" name="Prog. Lipid Res.">
        <title>GDSL family of serine esterases/lipases.</title>
        <authorList>
            <person name="Akoh C.C."/>
            <person name="Lee G.-C."/>
            <person name="Liaw Y.-C."/>
            <person name="Huang T.-H."/>
            <person name="Shaw J.-F."/>
        </authorList>
    </citation>
    <scope>REVIEW</scope>
</reference>
<reference key="6">
    <citation type="journal article" date="2008" name="Pak. J. Biol. Sci.">
        <title>Sequence analysis of GDSL lipase gene family in Arabidopsis thaliana.</title>
        <authorList>
            <person name="Ling H."/>
        </authorList>
    </citation>
    <scope>GENE FAMILY</scope>
</reference>
<proteinExistence type="evidence at transcript level"/>
<comment type="subcellular location">
    <subcellularLocation>
        <location evidence="3">Secreted</location>
    </subcellularLocation>
</comment>
<comment type="similarity">
    <text evidence="3">Belongs to the 'GDSL' lipolytic enzyme family.</text>
</comment>
<sequence>MKDNLERAKLMVSSTVFSWLLLCLFAVTTSVSVQPTCTFPAIYNFGDSNSDTGGISAAFEPIRDPYGQGFFHRPTGRDSDGRLTIDFIAERLGLPYLSAYLNSLGSNFRHGANFATGGSTIRRQNETIFQYGISPFSLDMQIAQFDQFKARSALLFTQIKSRYDREKLPRQEEFAKALYTFDIGQNDLSVGFRTMSVDQLKATIPDIVNHLASAVRNIYQQGGRTFWVHNTGPFGCLPVNMFYMGTPAPGYLDKSGCVKAQNEMAMEFNRKLKETVINLRKELTQAAITYVDVYTAKYEMMSNPKKLGFANPLKVCCGYHEKYDHIWCGNKGKVNNTEIYGGSCPNPVMAVSWDGVHYTEAANKHVADRTLNGLLTDPPVPITRACYRQ</sequence>
<name>GDL76_ARATH</name>
<dbReference type="EC" id="3.1.1.-"/>
<dbReference type="EMBL" id="AL163817">
    <property type="protein sequence ID" value="CAB87784.1"/>
    <property type="molecule type" value="Genomic_DNA"/>
</dbReference>
<dbReference type="EMBL" id="CP002688">
    <property type="protein sequence ID" value="AED92036.1"/>
    <property type="molecule type" value="Genomic_DNA"/>
</dbReference>
<dbReference type="EMBL" id="AK118393">
    <property type="protein sequence ID" value="BAC43003.1"/>
    <property type="molecule type" value="mRNA"/>
</dbReference>
<dbReference type="EMBL" id="BT005338">
    <property type="protein sequence ID" value="AAO63402.1"/>
    <property type="molecule type" value="mRNA"/>
</dbReference>
<dbReference type="PIR" id="T48618">
    <property type="entry name" value="T48618"/>
</dbReference>
<dbReference type="RefSeq" id="NP_196949.1">
    <property type="nucleotide sequence ID" value="NM_121449.2"/>
</dbReference>
<dbReference type="SMR" id="Q9LY84"/>
<dbReference type="FunCoup" id="Q9LY84">
    <property type="interactions" value="123"/>
</dbReference>
<dbReference type="STRING" id="3702.Q9LY84"/>
<dbReference type="GlyGen" id="Q9LY84">
    <property type="glycosylation" value="2 sites"/>
</dbReference>
<dbReference type="MetOSite" id="Q9LY84"/>
<dbReference type="PaxDb" id="3702-AT5G14450.1"/>
<dbReference type="ProteomicsDB" id="224767"/>
<dbReference type="EnsemblPlants" id="AT5G14450.1">
    <property type="protein sequence ID" value="AT5G14450.1"/>
    <property type="gene ID" value="AT5G14450"/>
</dbReference>
<dbReference type="GeneID" id="831296"/>
<dbReference type="Gramene" id="AT5G14450.1">
    <property type="protein sequence ID" value="AT5G14450.1"/>
    <property type="gene ID" value="AT5G14450"/>
</dbReference>
<dbReference type="KEGG" id="ath:AT5G14450"/>
<dbReference type="Araport" id="AT5G14450"/>
<dbReference type="TAIR" id="AT5G14450"/>
<dbReference type="eggNOG" id="ENOG502QRBK">
    <property type="taxonomic scope" value="Eukaryota"/>
</dbReference>
<dbReference type="HOGENOM" id="CLU_015101_2_0_1"/>
<dbReference type="InParanoid" id="Q9LY84"/>
<dbReference type="OMA" id="QNDMAVE"/>
<dbReference type="OrthoDB" id="1600564at2759"/>
<dbReference type="PhylomeDB" id="Q9LY84"/>
<dbReference type="BioCyc" id="ARA:AT5G14450-MONOMER"/>
<dbReference type="PRO" id="PR:Q9LY84"/>
<dbReference type="Proteomes" id="UP000006548">
    <property type="component" value="Chromosome 5"/>
</dbReference>
<dbReference type="ExpressionAtlas" id="Q9LY84">
    <property type="expression patterns" value="baseline and differential"/>
</dbReference>
<dbReference type="GO" id="GO:0005576">
    <property type="term" value="C:extracellular region"/>
    <property type="evidence" value="ECO:0007669"/>
    <property type="project" value="UniProtKB-SubCell"/>
</dbReference>
<dbReference type="GO" id="GO:0009505">
    <property type="term" value="C:plant-type cell wall"/>
    <property type="evidence" value="ECO:0007005"/>
    <property type="project" value="TAIR"/>
</dbReference>
<dbReference type="GO" id="GO:0009506">
    <property type="term" value="C:plasmodesma"/>
    <property type="evidence" value="ECO:0007005"/>
    <property type="project" value="TAIR"/>
</dbReference>
<dbReference type="GO" id="GO:0016788">
    <property type="term" value="F:hydrolase activity, acting on ester bonds"/>
    <property type="evidence" value="ECO:0007669"/>
    <property type="project" value="InterPro"/>
</dbReference>
<dbReference type="GO" id="GO:0016042">
    <property type="term" value="P:lipid catabolic process"/>
    <property type="evidence" value="ECO:0007669"/>
    <property type="project" value="UniProtKB-KW"/>
</dbReference>
<dbReference type="CDD" id="cd01837">
    <property type="entry name" value="SGNH_plant_lipase_like"/>
    <property type="match status" value="1"/>
</dbReference>
<dbReference type="FunFam" id="3.40.50.1110:FF:000009">
    <property type="entry name" value="GDSL esterase/lipase At1g09390"/>
    <property type="match status" value="1"/>
</dbReference>
<dbReference type="Gene3D" id="3.40.50.1110">
    <property type="entry name" value="SGNH hydrolase"/>
    <property type="match status" value="1"/>
</dbReference>
<dbReference type="InterPro" id="IPR001087">
    <property type="entry name" value="GDSL"/>
</dbReference>
<dbReference type="InterPro" id="IPR036514">
    <property type="entry name" value="SGNH_hydro_sf"/>
</dbReference>
<dbReference type="InterPro" id="IPR035669">
    <property type="entry name" value="SGNH_plant_lipase-like"/>
</dbReference>
<dbReference type="PANTHER" id="PTHR22835:SF219">
    <property type="entry name" value="GDSL-LIKE LIPASE_ACYLHYDROLASE"/>
    <property type="match status" value="1"/>
</dbReference>
<dbReference type="PANTHER" id="PTHR22835">
    <property type="entry name" value="ZINC FINGER FYVE DOMAIN CONTAINING PROTEIN"/>
    <property type="match status" value="1"/>
</dbReference>
<dbReference type="Pfam" id="PF00657">
    <property type="entry name" value="Lipase_GDSL"/>
    <property type="match status" value="1"/>
</dbReference>
<dbReference type="SUPFAM" id="SSF52266">
    <property type="entry name" value="SGNH hydrolase"/>
    <property type="match status" value="1"/>
</dbReference>
<protein>
    <recommendedName>
        <fullName>GDSL esterase/lipase At5g14450</fullName>
        <ecNumber>3.1.1.-</ecNumber>
    </recommendedName>
    <alternativeName>
        <fullName>Extracellular lipase At5g14450</fullName>
    </alternativeName>
</protein>
<organism>
    <name type="scientific">Arabidopsis thaliana</name>
    <name type="common">Mouse-ear cress</name>
    <dbReference type="NCBI Taxonomy" id="3702"/>
    <lineage>
        <taxon>Eukaryota</taxon>
        <taxon>Viridiplantae</taxon>
        <taxon>Streptophyta</taxon>
        <taxon>Embryophyta</taxon>
        <taxon>Tracheophyta</taxon>
        <taxon>Spermatophyta</taxon>
        <taxon>Magnoliopsida</taxon>
        <taxon>eudicotyledons</taxon>
        <taxon>Gunneridae</taxon>
        <taxon>Pentapetalae</taxon>
        <taxon>rosids</taxon>
        <taxon>malvids</taxon>
        <taxon>Brassicales</taxon>
        <taxon>Brassicaceae</taxon>
        <taxon>Camelineae</taxon>
        <taxon>Arabidopsis</taxon>
    </lineage>
</organism>
<evidence type="ECO:0000250" key="1"/>
<evidence type="ECO:0000255" key="2"/>
<evidence type="ECO:0000305" key="3"/>
<feature type="signal peptide" evidence="2">
    <location>
        <begin position="1"/>
        <end position="30"/>
    </location>
</feature>
<feature type="chain" id="PRO_0000367416" description="GDSL esterase/lipase At5g14450">
    <location>
        <begin position="31"/>
        <end position="389"/>
    </location>
</feature>
<feature type="active site" description="Nucleophile" evidence="1">
    <location>
        <position position="48"/>
    </location>
</feature>
<feature type="active site" evidence="1">
    <location>
        <position position="354"/>
    </location>
</feature>
<feature type="active site" evidence="1">
    <location>
        <position position="357"/>
    </location>
</feature>
<feature type="glycosylation site" description="N-linked (GlcNAc...) asparagine" evidence="2">
    <location>
        <position position="125"/>
    </location>
</feature>
<feature type="glycosylation site" description="N-linked (GlcNAc...) asparagine" evidence="2">
    <location>
        <position position="335"/>
    </location>
</feature>
<keyword id="KW-0325">Glycoprotein</keyword>
<keyword id="KW-0378">Hydrolase</keyword>
<keyword id="KW-0442">Lipid degradation</keyword>
<keyword id="KW-0443">Lipid metabolism</keyword>
<keyword id="KW-1185">Reference proteome</keyword>
<keyword id="KW-0964">Secreted</keyword>
<keyword id="KW-0732">Signal</keyword>
<gene>
    <name type="ordered locus">At5g14450</name>
    <name type="ORF">F18O22.240</name>
</gene>
<accession>Q9LY84</accession>